<feature type="chain" id="PRO_0000241121" description="Glutamyl-tRNA(Gln) amidotransferase subunit A">
    <location>
        <begin position="1"/>
        <end position="482"/>
    </location>
</feature>
<feature type="active site" description="Charge relay system" evidence="1">
    <location>
        <position position="80"/>
    </location>
</feature>
<feature type="active site" description="Charge relay system" evidence="1">
    <location>
        <position position="159"/>
    </location>
</feature>
<feature type="active site" description="Acyl-ester intermediate" evidence="1">
    <location>
        <position position="183"/>
    </location>
</feature>
<gene>
    <name evidence="1" type="primary">gatA</name>
    <name type="ordered locus">NSE_0256</name>
</gene>
<organism>
    <name type="scientific">Neorickettsia sennetsu (strain ATCC VR-367 / Miyayama)</name>
    <name type="common">Ehrlichia sennetsu</name>
    <dbReference type="NCBI Taxonomy" id="222891"/>
    <lineage>
        <taxon>Bacteria</taxon>
        <taxon>Pseudomonadati</taxon>
        <taxon>Pseudomonadota</taxon>
        <taxon>Alphaproteobacteria</taxon>
        <taxon>Rickettsiales</taxon>
        <taxon>Anaplasmataceae</taxon>
        <taxon>Neorickettsia</taxon>
    </lineage>
</organism>
<protein>
    <recommendedName>
        <fullName evidence="1">Glutamyl-tRNA(Gln) amidotransferase subunit A</fullName>
        <shortName evidence="1">Glu-ADT subunit A</shortName>
        <ecNumber evidence="1">6.3.5.7</ecNumber>
    </recommendedName>
</protein>
<sequence>MNDLIKLSVAKMHLALARREISSLELVEAHLLQIRERNAHTNALILVTEEEARQRAKLADERLKRGESVNTLTGIPCVIKDMYCTKGVRTTAASRALRNFVPTYESTVTSKLIDAGAVMLGKANMDEFAMGSSNTSSFFGPVKNPLKGKKGVDLVPGGSSGGSAAAVADYYSPFSLGSDTGGSVRQPASFCGLVGLRPTYGRCSRWGMIPLANSLDQAGILSRNVEDNAAVFEVISGYDRKDSTCAKLEPFKYNKNPDIRHIKVGIPQECKVSGLSSHIVKLWESTANILRQLGAEIIDVSLPCVEYSLMVYYIICSAEASSQLARYDGIRYSPDPSISASTISELYEKYRSVSFGREVKRRLFMGTHVLSSSGYADYYAAAKELQEEIVNEYSAVFEKVDVILNPTAPNDAFPIDGKLEPLEMYMNDIFTVPTSVAKLPCISIPVGLSEDDMPLGMHLTANYFAEELLLNVALALQNALYK</sequence>
<keyword id="KW-0067">ATP-binding</keyword>
<keyword id="KW-0436">Ligase</keyword>
<keyword id="KW-0547">Nucleotide-binding</keyword>
<keyword id="KW-0648">Protein biosynthesis</keyword>
<dbReference type="EC" id="6.3.5.7" evidence="1"/>
<dbReference type="EMBL" id="CP000237">
    <property type="protein sequence ID" value="ABD45852.1"/>
    <property type="molecule type" value="Genomic_DNA"/>
</dbReference>
<dbReference type="RefSeq" id="WP_011451655.1">
    <property type="nucleotide sequence ID" value="NC_007798.1"/>
</dbReference>
<dbReference type="SMR" id="Q2GEE7"/>
<dbReference type="STRING" id="222891.NSE_0256"/>
<dbReference type="KEGG" id="nse:NSE_0256"/>
<dbReference type="eggNOG" id="COG0154">
    <property type="taxonomic scope" value="Bacteria"/>
</dbReference>
<dbReference type="HOGENOM" id="CLU_009600_0_3_5"/>
<dbReference type="OrthoDB" id="9811471at2"/>
<dbReference type="Proteomes" id="UP000001942">
    <property type="component" value="Chromosome"/>
</dbReference>
<dbReference type="GO" id="GO:0030956">
    <property type="term" value="C:glutamyl-tRNA(Gln) amidotransferase complex"/>
    <property type="evidence" value="ECO:0007669"/>
    <property type="project" value="InterPro"/>
</dbReference>
<dbReference type="GO" id="GO:0005524">
    <property type="term" value="F:ATP binding"/>
    <property type="evidence" value="ECO:0007669"/>
    <property type="project" value="UniProtKB-KW"/>
</dbReference>
<dbReference type="GO" id="GO:0050567">
    <property type="term" value="F:glutaminyl-tRNA synthase (glutamine-hydrolyzing) activity"/>
    <property type="evidence" value="ECO:0007669"/>
    <property type="project" value="UniProtKB-UniRule"/>
</dbReference>
<dbReference type="GO" id="GO:0006412">
    <property type="term" value="P:translation"/>
    <property type="evidence" value="ECO:0007669"/>
    <property type="project" value="UniProtKB-UniRule"/>
</dbReference>
<dbReference type="Gene3D" id="3.90.1300.10">
    <property type="entry name" value="Amidase signature (AS) domain"/>
    <property type="match status" value="1"/>
</dbReference>
<dbReference type="HAMAP" id="MF_00120">
    <property type="entry name" value="GatA"/>
    <property type="match status" value="1"/>
</dbReference>
<dbReference type="InterPro" id="IPR000120">
    <property type="entry name" value="Amidase"/>
</dbReference>
<dbReference type="InterPro" id="IPR020556">
    <property type="entry name" value="Amidase_CS"/>
</dbReference>
<dbReference type="InterPro" id="IPR023631">
    <property type="entry name" value="Amidase_dom"/>
</dbReference>
<dbReference type="InterPro" id="IPR036928">
    <property type="entry name" value="AS_sf"/>
</dbReference>
<dbReference type="InterPro" id="IPR004412">
    <property type="entry name" value="GatA"/>
</dbReference>
<dbReference type="NCBIfam" id="TIGR00132">
    <property type="entry name" value="gatA"/>
    <property type="match status" value="1"/>
</dbReference>
<dbReference type="PANTHER" id="PTHR11895:SF151">
    <property type="entry name" value="GLUTAMYL-TRNA(GLN) AMIDOTRANSFERASE SUBUNIT A"/>
    <property type="match status" value="1"/>
</dbReference>
<dbReference type="PANTHER" id="PTHR11895">
    <property type="entry name" value="TRANSAMIDASE"/>
    <property type="match status" value="1"/>
</dbReference>
<dbReference type="Pfam" id="PF01425">
    <property type="entry name" value="Amidase"/>
    <property type="match status" value="1"/>
</dbReference>
<dbReference type="SUPFAM" id="SSF75304">
    <property type="entry name" value="Amidase signature (AS) enzymes"/>
    <property type="match status" value="1"/>
</dbReference>
<dbReference type="PROSITE" id="PS00571">
    <property type="entry name" value="AMIDASES"/>
    <property type="match status" value="1"/>
</dbReference>
<reference key="1">
    <citation type="journal article" date="2006" name="PLoS Genet.">
        <title>Comparative genomics of emerging human ehrlichiosis agents.</title>
        <authorList>
            <person name="Dunning Hotopp J.C."/>
            <person name="Lin M."/>
            <person name="Madupu R."/>
            <person name="Crabtree J."/>
            <person name="Angiuoli S.V."/>
            <person name="Eisen J.A."/>
            <person name="Seshadri R."/>
            <person name="Ren Q."/>
            <person name="Wu M."/>
            <person name="Utterback T.R."/>
            <person name="Smith S."/>
            <person name="Lewis M."/>
            <person name="Khouri H."/>
            <person name="Zhang C."/>
            <person name="Niu H."/>
            <person name="Lin Q."/>
            <person name="Ohashi N."/>
            <person name="Zhi N."/>
            <person name="Nelson W.C."/>
            <person name="Brinkac L.M."/>
            <person name="Dodson R.J."/>
            <person name="Rosovitz M.J."/>
            <person name="Sundaram J.P."/>
            <person name="Daugherty S.C."/>
            <person name="Davidsen T."/>
            <person name="Durkin A.S."/>
            <person name="Gwinn M.L."/>
            <person name="Haft D.H."/>
            <person name="Selengut J.D."/>
            <person name="Sullivan S.A."/>
            <person name="Zafar N."/>
            <person name="Zhou L."/>
            <person name="Benahmed F."/>
            <person name="Forberger H."/>
            <person name="Halpin R."/>
            <person name="Mulligan S."/>
            <person name="Robinson J."/>
            <person name="White O."/>
            <person name="Rikihisa Y."/>
            <person name="Tettelin H."/>
        </authorList>
    </citation>
    <scope>NUCLEOTIDE SEQUENCE [LARGE SCALE GENOMIC DNA]</scope>
    <source>
        <strain>ATCC VR-367 / Miyayama</strain>
    </source>
</reference>
<name>GATA_NEOSM</name>
<evidence type="ECO:0000255" key="1">
    <source>
        <dbReference type="HAMAP-Rule" id="MF_00120"/>
    </source>
</evidence>
<comment type="function">
    <text evidence="1">Allows the formation of correctly charged Gln-tRNA(Gln) through the transamidation of misacylated Glu-tRNA(Gln) in organisms which lack glutaminyl-tRNA synthetase. The reaction takes place in the presence of glutamine and ATP through an activated gamma-phospho-Glu-tRNA(Gln).</text>
</comment>
<comment type="catalytic activity">
    <reaction evidence="1">
        <text>L-glutamyl-tRNA(Gln) + L-glutamine + ATP + H2O = L-glutaminyl-tRNA(Gln) + L-glutamate + ADP + phosphate + H(+)</text>
        <dbReference type="Rhea" id="RHEA:17521"/>
        <dbReference type="Rhea" id="RHEA-COMP:9681"/>
        <dbReference type="Rhea" id="RHEA-COMP:9684"/>
        <dbReference type="ChEBI" id="CHEBI:15377"/>
        <dbReference type="ChEBI" id="CHEBI:15378"/>
        <dbReference type="ChEBI" id="CHEBI:29985"/>
        <dbReference type="ChEBI" id="CHEBI:30616"/>
        <dbReference type="ChEBI" id="CHEBI:43474"/>
        <dbReference type="ChEBI" id="CHEBI:58359"/>
        <dbReference type="ChEBI" id="CHEBI:78520"/>
        <dbReference type="ChEBI" id="CHEBI:78521"/>
        <dbReference type="ChEBI" id="CHEBI:456216"/>
        <dbReference type="EC" id="6.3.5.7"/>
    </reaction>
</comment>
<comment type="subunit">
    <text evidence="1">Heterotrimer of A, B and C subunits.</text>
</comment>
<comment type="similarity">
    <text evidence="1">Belongs to the amidase family. GatA subfamily.</text>
</comment>
<proteinExistence type="inferred from homology"/>
<accession>Q2GEE7</accession>